<protein>
    <recommendedName>
        <fullName evidence="1">UPF0223 protein SPP_1423</fullName>
    </recommendedName>
</protein>
<evidence type="ECO:0000255" key="1">
    <source>
        <dbReference type="HAMAP-Rule" id="MF_01041"/>
    </source>
</evidence>
<reference key="1">
    <citation type="journal article" date="2010" name="Genome Biol.">
        <title>Structure and dynamics of the pan-genome of Streptococcus pneumoniae and closely related species.</title>
        <authorList>
            <person name="Donati C."/>
            <person name="Hiller N.L."/>
            <person name="Tettelin H."/>
            <person name="Muzzi A."/>
            <person name="Croucher N.J."/>
            <person name="Angiuoli S.V."/>
            <person name="Oggioni M."/>
            <person name="Dunning Hotopp J.C."/>
            <person name="Hu F.Z."/>
            <person name="Riley D.R."/>
            <person name="Covacci A."/>
            <person name="Mitchell T.J."/>
            <person name="Bentley S.D."/>
            <person name="Kilian M."/>
            <person name="Ehrlich G.D."/>
            <person name="Rappuoli R."/>
            <person name="Moxon E.R."/>
            <person name="Masignani V."/>
        </authorList>
    </citation>
    <scope>NUCLEOTIDE SEQUENCE [LARGE SCALE GENOMIC DNA]</scope>
    <source>
        <strain>P1031</strain>
    </source>
</reference>
<accession>C1CLB2</accession>
<gene>
    <name type="ordered locus">SPP_1423</name>
</gene>
<organism>
    <name type="scientific">Streptococcus pneumoniae (strain P1031)</name>
    <dbReference type="NCBI Taxonomy" id="488223"/>
    <lineage>
        <taxon>Bacteria</taxon>
        <taxon>Bacillati</taxon>
        <taxon>Bacillota</taxon>
        <taxon>Bacilli</taxon>
        <taxon>Lactobacillales</taxon>
        <taxon>Streptococcaceae</taxon>
        <taxon>Streptococcus</taxon>
    </lineage>
</organism>
<dbReference type="EMBL" id="CP000920">
    <property type="protein sequence ID" value="ACO22061.1"/>
    <property type="molecule type" value="Genomic_DNA"/>
</dbReference>
<dbReference type="RefSeq" id="WP_001041974.1">
    <property type="nucleotide sequence ID" value="NC_012467.1"/>
</dbReference>
<dbReference type="SMR" id="C1CLB2"/>
<dbReference type="KEGG" id="spp:SPP_1423"/>
<dbReference type="HOGENOM" id="CLU_166693_0_0_9"/>
<dbReference type="Gene3D" id="1.10.220.80">
    <property type="entry name" value="BH2638-like"/>
    <property type="match status" value="1"/>
</dbReference>
<dbReference type="HAMAP" id="MF_01041">
    <property type="entry name" value="UPF0223"/>
    <property type="match status" value="1"/>
</dbReference>
<dbReference type="InterPro" id="IPR023324">
    <property type="entry name" value="BH2638-like_sf"/>
</dbReference>
<dbReference type="InterPro" id="IPR007920">
    <property type="entry name" value="UPF0223"/>
</dbReference>
<dbReference type="NCBIfam" id="NF003353">
    <property type="entry name" value="PRK04387.1"/>
    <property type="match status" value="1"/>
</dbReference>
<dbReference type="Pfam" id="PF05256">
    <property type="entry name" value="UPF0223"/>
    <property type="match status" value="1"/>
</dbReference>
<dbReference type="PIRSF" id="PIRSF037260">
    <property type="entry name" value="UPF0223"/>
    <property type="match status" value="1"/>
</dbReference>
<dbReference type="SUPFAM" id="SSF158504">
    <property type="entry name" value="BH2638-like"/>
    <property type="match status" value="1"/>
</dbReference>
<name>Y1423_STRZP</name>
<feature type="chain" id="PRO_1000149550" description="UPF0223 protein SPP_1423">
    <location>
        <begin position="1"/>
        <end position="92"/>
    </location>
</feature>
<proteinExistence type="inferred from homology"/>
<comment type="similarity">
    <text evidence="1">Belongs to the UPF0223 family.</text>
</comment>
<sequence>MNKQYSYPLDLSWSTEELASVLSFFNDVEAAYEGKVEAKKLLDSYKGFKAVVPSKSEEKRLGREFETVSGYSLYRAVQAAKEKGEGKISLGK</sequence>